<proteinExistence type="inferred from homology"/>
<evidence type="ECO:0000250" key="1"/>
<evidence type="ECO:0000305" key="2"/>
<feature type="chain" id="PRO_0000331600" description="Ragulator complex protein LAMTOR5 homolog">
    <location>
        <begin position="1"/>
        <end position="89"/>
    </location>
</feature>
<sequence>MDKQLADTFTQLSQQNGVVGYCCVDESGLCLKAHGNKQSSNAGFYKSLLDKSKFLTQSGEPANIVIETDTANIFIQQNDKITLSVSKLP</sequence>
<dbReference type="EMBL" id="AAFI02000055">
    <property type="protein sequence ID" value="EAL65661.1"/>
    <property type="molecule type" value="Genomic_DNA"/>
</dbReference>
<dbReference type="RefSeq" id="XP_639019.1">
    <property type="nucleotide sequence ID" value="XM_633927.1"/>
</dbReference>
<dbReference type="SMR" id="Q54QW5"/>
<dbReference type="FunCoup" id="Q54QW5">
    <property type="interactions" value="5"/>
</dbReference>
<dbReference type="STRING" id="44689.Q54QW5"/>
<dbReference type="PaxDb" id="44689-DDB0238095"/>
<dbReference type="EnsemblProtists" id="EAL65661">
    <property type="protein sequence ID" value="EAL65661"/>
    <property type="gene ID" value="DDB_G0283567"/>
</dbReference>
<dbReference type="GeneID" id="8624149"/>
<dbReference type="KEGG" id="ddi:DDB_G0283567"/>
<dbReference type="dictyBase" id="DDB_G0283567"/>
<dbReference type="VEuPathDB" id="AmoebaDB:DDB_G0283567"/>
<dbReference type="eggNOG" id="ENOG502RIFA">
    <property type="taxonomic scope" value="Eukaryota"/>
</dbReference>
<dbReference type="HOGENOM" id="CLU_164970_0_0_1"/>
<dbReference type="InParanoid" id="Q54QW5"/>
<dbReference type="OMA" id="ECPTINI"/>
<dbReference type="PhylomeDB" id="Q54QW5"/>
<dbReference type="Reactome" id="R-DDI-1632852">
    <property type="pathway name" value="Macroautophagy"/>
</dbReference>
<dbReference type="Reactome" id="R-DDI-165159">
    <property type="pathway name" value="MTOR signalling"/>
</dbReference>
<dbReference type="Reactome" id="R-DDI-166208">
    <property type="pathway name" value="mTORC1-mediated signalling"/>
</dbReference>
<dbReference type="Reactome" id="R-DDI-380972">
    <property type="pathway name" value="Energy dependent regulation of mTOR by LKB1-AMPK"/>
</dbReference>
<dbReference type="Reactome" id="R-DDI-5628897">
    <property type="pathway name" value="TP53 Regulates Metabolic Genes"/>
</dbReference>
<dbReference type="Reactome" id="R-DDI-8943724">
    <property type="pathway name" value="Regulation of PTEN gene transcription"/>
</dbReference>
<dbReference type="Reactome" id="R-DDI-9639288">
    <property type="pathway name" value="Amino acids regulate mTORC1"/>
</dbReference>
<dbReference type="PRO" id="PR:Q54QW5"/>
<dbReference type="Proteomes" id="UP000002195">
    <property type="component" value="Chromosome 4"/>
</dbReference>
<dbReference type="GO" id="GO:0005764">
    <property type="term" value="C:lysosome"/>
    <property type="evidence" value="ECO:0000250"/>
    <property type="project" value="UniProtKB"/>
</dbReference>
<dbReference type="GO" id="GO:0071986">
    <property type="term" value="C:Ragulator complex"/>
    <property type="evidence" value="ECO:0000250"/>
    <property type="project" value="UniProtKB"/>
</dbReference>
<dbReference type="GO" id="GO:0071230">
    <property type="term" value="P:cellular response to amino acid stimulus"/>
    <property type="evidence" value="ECO:0000250"/>
    <property type="project" value="UniProtKB"/>
</dbReference>
<dbReference type="GO" id="GO:0043066">
    <property type="term" value="P:negative regulation of apoptotic process"/>
    <property type="evidence" value="ECO:0007669"/>
    <property type="project" value="InterPro"/>
</dbReference>
<dbReference type="GO" id="GO:0032008">
    <property type="term" value="P:positive regulation of TOR signaling"/>
    <property type="evidence" value="ECO:0000250"/>
    <property type="project" value="UniProtKB"/>
</dbReference>
<dbReference type="GO" id="GO:1904263">
    <property type="term" value="P:positive regulation of TORC1 signaling"/>
    <property type="evidence" value="ECO:0000318"/>
    <property type="project" value="GO_Central"/>
</dbReference>
<dbReference type="GO" id="GO:0061462">
    <property type="term" value="P:protein localization to lysosome"/>
    <property type="evidence" value="ECO:0000250"/>
    <property type="project" value="UniProtKB"/>
</dbReference>
<dbReference type="GO" id="GO:0008361">
    <property type="term" value="P:regulation of cell size"/>
    <property type="evidence" value="ECO:0000250"/>
    <property type="project" value="UniProtKB"/>
</dbReference>
<dbReference type="FunFam" id="3.30.450.30:FF:000005">
    <property type="entry name" value="Ragulator complex protein LAMTOR5 homolog"/>
    <property type="match status" value="1"/>
</dbReference>
<dbReference type="Gene3D" id="3.30.450.30">
    <property type="entry name" value="Dynein light chain 2a, cytoplasmic"/>
    <property type="match status" value="1"/>
</dbReference>
<dbReference type="InterPro" id="IPR024135">
    <property type="entry name" value="LAMTOR5"/>
</dbReference>
<dbReference type="PANTHER" id="PTHR13342">
    <property type="entry name" value="RAGULATOR COMPLEX PROTEIN LAMTOR5"/>
    <property type="match status" value="1"/>
</dbReference>
<dbReference type="PANTHER" id="PTHR13342:SF2">
    <property type="entry name" value="RAGULATOR COMPLEX PROTEIN LAMTOR5"/>
    <property type="match status" value="1"/>
</dbReference>
<dbReference type="Pfam" id="PF16672">
    <property type="entry name" value="LAMTOR5"/>
    <property type="match status" value="1"/>
</dbReference>
<dbReference type="SUPFAM" id="SSF103196">
    <property type="entry name" value="Roadblock/LC7 domain"/>
    <property type="match status" value="1"/>
</dbReference>
<protein>
    <recommendedName>
        <fullName>Ragulator complex protein LAMTOR5 homolog</fullName>
    </recommendedName>
    <alternativeName>
        <fullName>Late endosomal/lysosomal adaptor and MAPK and MTOR activator 5</fullName>
    </alternativeName>
</protein>
<reference key="1">
    <citation type="journal article" date="2005" name="Nature">
        <title>The genome of the social amoeba Dictyostelium discoideum.</title>
        <authorList>
            <person name="Eichinger L."/>
            <person name="Pachebat J.A."/>
            <person name="Gloeckner G."/>
            <person name="Rajandream M.A."/>
            <person name="Sucgang R."/>
            <person name="Berriman M."/>
            <person name="Song J."/>
            <person name="Olsen R."/>
            <person name="Szafranski K."/>
            <person name="Xu Q."/>
            <person name="Tunggal B."/>
            <person name="Kummerfeld S."/>
            <person name="Madera M."/>
            <person name="Konfortov B.A."/>
            <person name="Rivero F."/>
            <person name="Bankier A.T."/>
            <person name="Lehmann R."/>
            <person name="Hamlin N."/>
            <person name="Davies R."/>
            <person name="Gaudet P."/>
            <person name="Fey P."/>
            <person name="Pilcher K."/>
            <person name="Chen G."/>
            <person name="Saunders D."/>
            <person name="Sodergren E.J."/>
            <person name="Davis P."/>
            <person name="Kerhornou A."/>
            <person name="Nie X."/>
            <person name="Hall N."/>
            <person name="Anjard C."/>
            <person name="Hemphill L."/>
            <person name="Bason N."/>
            <person name="Farbrother P."/>
            <person name="Desany B."/>
            <person name="Just E."/>
            <person name="Morio T."/>
            <person name="Rost R."/>
            <person name="Churcher C.M."/>
            <person name="Cooper J."/>
            <person name="Haydock S."/>
            <person name="van Driessche N."/>
            <person name="Cronin A."/>
            <person name="Goodhead I."/>
            <person name="Muzny D.M."/>
            <person name="Mourier T."/>
            <person name="Pain A."/>
            <person name="Lu M."/>
            <person name="Harper D."/>
            <person name="Lindsay R."/>
            <person name="Hauser H."/>
            <person name="James K.D."/>
            <person name="Quiles M."/>
            <person name="Madan Babu M."/>
            <person name="Saito T."/>
            <person name="Buchrieser C."/>
            <person name="Wardroper A."/>
            <person name="Felder M."/>
            <person name="Thangavelu M."/>
            <person name="Johnson D."/>
            <person name="Knights A."/>
            <person name="Loulseged H."/>
            <person name="Mungall K.L."/>
            <person name="Oliver K."/>
            <person name="Price C."/>
            <person name="Quail M.A."/>
            <person name="Urushihara H."/>
            <person name="Hernandez J."/>
            <person name="Rabbinowitsch E."/>
            <person name="Steffen D."/>
            <person name="Sanders M."/>
            <person name="Ma J."/>
            <person name="Kohara Y."/>
            <person name="Sharp S."/>
            <person name="Simmonds M.N."/>
            <person name="Spiegler S."/>
            <person name="Tivey A."/>
            <person name="Sugano S."/>
            <person name="White B."/>
            <person name="Walker D."/>
            <person name="Woodward J.R."/>
            <person name="Winckler T."/>
            <person name="Tanaka Y."/>
            <person name="Shaulsky G."/>
            <person name="Schleicher M."/>
            <person name="Weinstock G.M."/>
            <person name="Rosenthal A."/>
            <person name="Cox E.C."/>
            <person name="Chisholm R.L."/>
            <person name="Gibbs R.A."/>
            <person name="Loomis W.F."/>
            <person name="Platzer M."/>
            <person name="Kay R.R."/>
            <person name="Williams J.G."/>
            <person name="Dear P.H."/>
            <person name="Noegel A.A."/>
            <person name="Barrell B.G."/>
            <person name="Kuspa A."/>
        </authorList>
    </citation>
    <scope>NUCLEOTIDE SEQUENCE [LARGE SCALE GENOMIC DNA]</scope>
    <source>
        <strain>AX4</strain>
    </source>
</reference>
<keyword id="KW-0963">Cytoplasm</keyword>
<keyword id="KW-0458">Lysosome</keyword>
<keyword id="KW-1185">Reference proteome</keyword>
<name>LTOR5_DICDI</name>
<organism>
    <name type="scientific">Dictyostelium discoideum</name>
    <name type="common">Social amoeba</name>
    <dbReference type="NCBI Taxonomy" id="44689"/>
    <lineage>
        <taxon>Eukaryota</taxon>
        <taxon>Amoebozoa</taxon>
        <taxon>Evosea</taxon>
        <taxon>Eumycetozoa</taxon>
        <taxon>Dictyostelia</taxon>
        <taxon>Dictyosteliales</taxon>
        <taxon>Dictyosteliaceae</taxon>
        <taxon>Dictyostelium</taxon>
    </lineage>
</organism>
<comment type="function">
    <text evidence="1">Regulator of the TOR pathway, a signaling cascade that promotes cell growth in response to growth factors, energy levels, and amino acids. As part of the Ragulator complex, may activate the TOR signaling cascade in response to amino acids (By similarity).</text>
</comment>
<comment type="subunit">
    <text evidence="1">Part of the Ragulator complex.</text>
</comment>
<comment type="subcellular location">
    <subcellularLocation>
        <location evidence="1">Cytoplasm</location>
    </subcellularLocation>
    <subcellularLocation>
        <location evidence="1">Lysosome</location>
    </subcellularLocation>
</comment>
<comment type="similarity">
    <text evidence="2">Belongs to the LAMTOR5 family.</text>
</comment>
<accession>Q54QW5</accession>
<gene>
    <name type="ORF">DDB_G0283567</name>
</gene>